<gene>
    <name evidence="1" type="primary">yfiC</name>
    <name type="ordered locus">ECBD_1105</name>
    <name type="ordered locus">ECD_02469</name>
    <name type="ordered locus">B21_02433</name>
</gene>
<feature type="chain" id="PRO_0000387357" description="tRNA1(Val) (adenine(37)-N6)-methyltransferase">
    <location>
        <begin position="1"/>
        <end position="245"/>
    </location>
</feature>
<protein>
    <recommendedName>
        <fullName evidence="1">tRNA1(Val) (adenine(37)-N6)-methyltransferase</fullName>
        <ecNumber evidence="1">2.1.1.223</ecNumber>
    </recommendedName>
    <alternativeName>
        <fullName evidence="1">tRNA m6A37 methyltransferase</fullName>
    </alternativeName>
</protein>
<evidence type="ECO:0000255" key="1">
    <source>
        <dbReference type="HAMAP-Rule" id="MF_01872"/>
    </source>
</evidence>
<sequence>MSQSTSVLRRNGFTFKQFFVAHDRCAMKVGTDGILLGAWAPVAGVKRCLDIGAGSGLLALMLAQRTDDSVMIDAVELESEAAAQAQENINQSPWAERINVHTADIQQWITQQTVRFDLIISNPPYYQQGVECSTPQREQARYTTTLDHPSLLTCAAECITEEGFFCVVLPEQIGNGFTELALSMGWHLRLRTDVAENEARLPHRVLLAFSPQAGECFSDRLVIRGPDQNYSEAYTALTQAFYLFM</sequence>
<reference key="1">
    <citation type="submission" date="2009-06" db="EMBL/GenBank/DDBJ databases">
        <title>Sequencing and gene expression analysis of Escherichia coli BL21.</title>
        <authorList>
            <person name="Leparc G."/>
            <person name="Striedner G."/>
            <person name="Bayer K."/>
            <person name="Kreil D."/>
            <person name="Krempl P.M."/>
        </authorList>
    </citation>
    <scope>NUCLEOTIDE SEQUENCE [LARGE SCALE GENOMIC DNA]</scope>
    <source>
        <strain>B / BL21-DE3</strain>
    </source>
</reference>
<reference key="2">
    <citation type="submission" date="2009-07" db="EMBL/GenBank/DDBJ databases">
        <title>Complete sequence of Escherichia coli BL21(DE3).</title>
        <authorList>
            <person name="Lucas S."/>
            <person name="Copeland A."/>
            <person name="Lapidus A."/>
            <person name="Glavina del Rio T."/>
            <person name="Dalin E."/>
            <person name="Tice H."/>
            <person name="Bruce D."/>
            <person name="Goodwin L."/>
            <person name="Pitluck S."/>
            <person name="LaButti K.M."/>
            <person name="Clum A."/>
            <person name="Larimer F."/>
            <person name="Land M."/>
            <person name="Hauser L."/>
            <person name="Kyrpides N."/>
            <person name="Anderson I."/>
            <person name="Sorek R."/>
            <person name="Rubin E."/>
        </authorList>
    </citation>
    <scope>NUCLEOTIDE SEQUENCE [LARGE SCALE GENOMIC DNA]</scope>
    <source>
        <strain>B / BL21-DE3</strain>
    </source>
</reference>
<reference key="3">
    <citation type="journal article" date="2009" name="J. Mol. Biol.">
        <title>Genome sequences of Escherichia coli B strains REL606 and BL21(DE3).</title>
        <authorList>
            <person name="Jeong H."/>
            <person name="Barbe V."/>
            <person name="Lee C.H."/>
            <person name="Vallenet D."/>
            <person name="Yu D.S."/>
            <person name="Choi S.H."/>
            <person name="Couloux A."/>
            <person name="Lee S.W."/>
            <person name="Yoon S.H."/>
            <person name="Cattolico L."/>
            <person name="Hur C.G."/>
            <person name="Park H.S."/>
            <person name="Segurens B."/>
            <person name="Kim S.C."/>
            <person name="Oh T.K."/>
            <person name="Lenski R.E."/>
            <person name="Studier F.W."/>
            <person name="Daegelen P."/>
            <person name="Kim J.F."/>
        </authorList>
    </citation>
    <scope>NUCLEOTIDE SEQUENCE [LARGE SCALE GENOMIC DNA]</scope>
    <source>
        <strain>B / BL21-DE3</strain>
    </source>
</reference>
<name>TRMN6_ECOBD</name>
<organism>
    <name type="scientific">Escherichia coli (strain B / BL21-DE3)</name>
    <dbReference type="NCBI Taxonomy" id="469008"/>
    <lineage>
        <taxon>Bacteria</taxon>
        <taxon>Pseudomonadati</taxon>
        <taxon>Pseudomonadota</taxon>
        <taxon>Gammaproteobacteria</taxon>
        <taxon>Enterobacterales</taxon>
        <taxon>Enterobacteriaceae</taxon>
        <taxon>Escherichia</taxon>
    </lineage>
</organism>
<keyword id="KW-0963">Cytoplasm</keyword>
<keyword id="KW-0489">Methyltransferase</keyword>
<keyword id="KW-0949">S-adenosyl-L-methionine</keyword>
<keyword id="KW-0808">Transferase</keyword>
<keyword id="KW-0819">tRNA processing</keyword>
<proteinExistence type="inferred from homology"/>
<dbReference type="EC" id="2.1.1.223" evidence="1"/>
<dbReference type="EMBL" id="AM946981">
    <property type="protein sequence ID" value="CAQ32950.1"/>
    <property type="molecule type" value="Genomic_DNA"/>
</dbReference>
<dbReference type="EMBL" id="CP001665">
    <property type="protein sequence ID" value="ACT28171.1"/>
    <property type="molecule type" value="Genomic_DNA"/>
</dbReference>
<dbReference type="EMBL" id="CP001509">
    <property type="protein sequence ID" value="ACT44288.1"/>
    <property type="molecule type" value="Genomic_DNA"/>
</dbReference>
<dbReference type="SMR" id="C5W7S9"/>
<dbReference type="KEGG" id="ebd:ECBD_1105"/>
<dbReference type="KEGG" id="ebe:B21_02433"/>
<dbReference type="KEGG" id="ebl:ECD_02469"/>
<dbReference type="PATRIC" id="fig|469008.15.peg.2493"/>
<dbReference type="eggNOG" id="COG4123">
    <property type="taxonomic scope" value="Bacteria"/>
</dbReference>
<dbReference type="HOGENOM" id="CLU_061983_0_0_6"/>
<dbReference type="GO" id="GO:0005737">
    <property type="term" value="C:cytoplasm"/>
    <property type="evidence" value="ECO:0007669"/>
    <property type="project" value="UniProtKB-SubCell"/>
</dbReference>
<dbReference type="GO" id="GO:0003676">
    <property type="term" value="F:nucleic acid binding"/>
    <property type="evidence" value="ECO:0007669"/>
    <property type="project" value="InterPro"/>
</dbReference>
<dbReference type="GO" id="GO:0016430">
    <property type="term" value="F:tRNA (adenine-N6)-methyltransferase activity"/>
    <property type="evidence" value="ECO:0007669"/>
    <property type="project" value="UniProtKB-UniRule"/>
</dbReference>
<dbReference type="GO" id="GO:0032259">
    <property type="term" value="P:methylation"/>
    <property type="evidence" value="ECO:0007669"/>
    <property type="project" value="UniProtKB-KW"/>
</dbReference>
<dbReference type="GO" id="GO:0008033">
    <property type="term" value="P:tRNA processing"/>
    <property type="evidence" value="ECO:0007669"/>
    <property type="project" value="UniProtKB-UniRule"/>
</dbReference>
<dbReference type="CDD" id="cd02440">
    <property type="entry name" value="AdoMet_MTases"/>
    <property type="match status" value="1"/>
</dbReference>
<dbReference type="FunFam" id="3.40.50.150:FF:000087">
    <property type="entry name" value="tRNA1(Val) (adenine(37)-N6)-methyltransferase"/>
    <property type="match status" value="1"/>
</dbReference>
<dbReference type="Gene3D" id="3.40.50.150">
    <property type="entry name" value="Vaccinia Virus protein VP39"/>
    <property type="match status" value="1"/>
</dbReference>
<dbReference type="HAMAP" id="MF_01872">
    <property type="entry name" value="tRNA_methyltr_YfiC"/>
    <property type="match status" value="1"/>
</dbReference>
<dbReference type="InterPro" id="IPR002052">
    <property type="entry name" value="DNA_methylase_N6_adenine_CS"/>
</dbReference>
<dbReference type="InterPro" id="IPR029063">
    <property type="entry name" value="SAM-dependent_MTases_sf"/>
</dbReference>
<dbReference type="InterPro" id="IPR007848">
    <property type="entry name" value="Small_mtfrase_dom"/>
</dbReference>
<dbReference type="InterPro" id="IPR050210">
    <property type="entry name" value="tRNA_Adenine-N(6)_MTase"/>
</dbReference>
<dbReference type="InterPro" id="IPR022882">
    <property type="entry name" value="tRNA_adenine-N6_MeTrfase"/>
</dbReference>
<dbReference type="NCBIfam" id="NF047853">
    <property type="entry name" value="tRm6a37MtseTrmN"/>
    <property type="match status" value="1"/>
</dbReference>
<dbReference type="PANTHER" id="PTHR47739">
    <property type="entry name" value="TRNA1(VAL) (ADENINE(37)-N6)-METHYLTRANSFERASE"/>
    <property type="match status" value="1"/>
</dbReference>
<dbReference type="PANTHER" id="PTHR47739:SF1">
    <property type="entry name" value="TRNA1(VAL) (ADENINE(37)-N6)-METHYLTRANSFERASE"/>
    <property type="match status" value="1"/>
</dbReference>
<dbReference type="Pfam" id="PF05175">
    <property type="entry name" value="MTS"/>
    <property type="match status" value="1"/>
</dbReference>
<dbReference type="SUPFAM" id="SSF53335">
    <property type="entry name" value="S-adenosyl-L-methionine-dependent methyltransferases"/>
    <property type="match status" value="1"/>
</dbReference>
<dbReference type="PROSITE" id="PS00092">
    <property type="entry name" value="N6_MTASE"/>
    <property type="match status" value="1"/>
</dbReference>
<comment type="function">
    <text evidence="1">Specifically methylates the adenine in position 37 of tRNA(1)(Val) (anticodon cmo5UAC).</text>
</comment>
<comment type="catalytic activity">
    <reaction evidence="1">
        <text>adenosine(37) in tRNA1(Val) + S-adenosyl-L-methionine = N(6)-methyladenosine(37) in tRNA1(Val) + S-adenosyl-L-homocysteine + H(+)</text>
        <dbReference type="Rhea" id="RHEA:43160"/>
        <dbReference type="Rhea" id="RHEA-COMP:10369"/>
        <dbReference type="Rhea" id="RHEA-COMP:10370"/>
        <dbReference type="ChEBI" id="CHEBI:15378"/>
        <dbReference type="ChEBI" id="CHEBI:57856"/>
        <dbReference type="ChEBI" id="CHEBI:59789"/>
        <dbReference type="ChEBI" id="CHEBI:74411"/>
        <dbReference type="ChEBI" id="CHEBI:74449"/>
        <dbReference type="EC" id="2.1.1.223"/>
    </reaction>
</comment>
<comment type="subcellular location">
    <subcellularLocation>
        <location evidence="1">Cytoplasm</location>
    </subcellularLocation>
</comment>
<comment type="similarity">
    <text evidence="1">Belongs to the methyltransferase superfamily. tRNA (adenine-N(6)-)-methyltransferase family.</text>
</comment>
<accession>C5W7S9</accession>
<accession>C6EK11</accession>